<protein>
    <recommendedName>
        <fullName>Uncharacterized protein 107L</fullName>
    </recommendedName>
</protein>
<organism>
    <name type="scientific">Invertebrate iridescent virus 6</name>
    <name type="common">IIV-6</name>
    <name type="synonym">Chilo iridescent virus</name>
    <dbReference type="NCBI Taxonomy" id="176652"/>
    <lineage>
        <taxon>Viruses</taxon>
        <taxon>Varidnaviria</taxon>
        <taxon>Bamfordvirae</taxon>
        <taxon>Nucleocytoviricota</taxon>
        <taxon>Megaviricetes</taxon>
        <taxon>Pimascovirales</taxon>
        <taxon>Iridoviridae</taxon>
        <taxon>Betairidovirinae</taxon>
        <taxon>Iridovirus</taxon>
    </lineage>
</organism>
<feature type="chain" id="PRO_0000377990" description="Uncharacterized protein 107L">
    <location>
        <begin position="1"/>
        <end position="80"/>
    </location>
</feature>
<sequence length="80" mass="9622">MDPIRCFSCNKIMKSPNEKGMVFVRNMKKEDREQFFKKFNYTRLCCKRMYLSAVNFQDELFQYENARSTLNVDGTITKPF</sequence>
<keyword id="KW-1185">Reference proteome</keyword>
<dbReference type="EMBL" id="AF303741">
    <property type="protein sequence ID" value="AAB94436.1"/>
    <property type="molecule type" value="Genomic_DNA"/>
</dbReference>
<dbReference type="PIR" id="T03062">
    <property type="entry name" value="T03062"/>
</dbReference>
<dbReference type="RefSeq" id="NP_149570.1">
    <property type="nucleotide sequence ID" value="NC_003038.1"/>
</dbReference>
<dbReference type="SMR" id="O55725"/>
<dbReference type="KEGG" id="vg:1733051"/>
<dbReference type="OrthoDB" id="29110at10239"/>
<dbReference type="Proteomes" id="UP000001359">
    <property type="component" value="Genome"/>
</dbReference>
<dbReference type="GO" id="GO:0003677">
    <property type="term" value="F:DNA binding"/>
    <property type="evidence" value="ECO:0007669"/>
    <property type="project" value="InterPro"/>
</dbReference>
<dbReference type="GO" id="GO:0003899">
    <property type="term" value="F:DNA-directed RNA polymerase activity"/>
    <property type="evidence" value="ECO:0007669"/>
    <property type="project" value="InterPro"/>
</dbReference>
<dbReference type="GO" id="GO:0006351">
    <property type="term" value="P:DNA-templated transcription"/>
    <property type="evidence" value="ECO:0007669"/>
    <property type="project" value="InterPro"/>
</dbReference>
<dbReference type="Gene3D" id="1.10.10.60">
    <property type="entry name" value="Homeodomain-like"/>
    <property type="match status" value="1"/>
</dbReference>
<dbReference type="InterPro" id="IPR023580">
    <property type="entry name" value="RNA_pol_su_RPB10"/>
</dbReference>
<dbReference type="InterPro" id="IPR000268">
    <property type="entry name" value="RPABC5/Rpb10"/>
</dbReference>
<dbReference type="Pfam" id="PF01194">
    <property type="entry name" value="RNA_pol_N"/>
    <property type="match status" value="1"/>
</dbReference>
<dbReference type="PIRSF" id="PIRSF005653">
    <property type="entry name" value="RNA_pol_N/8_sub"/>
    <property type="match status" value="1"/>
</dbReference>
<dbReference type="SUPFAM" id="SSF46924">
    <property type="entry name" value="RNA polymerase subunit RPB10"/>
    <property type="match status" value="1"/>
</dbReference>
<gene>
    <name type="ORF">IIV6-107L</name>
</gene>
<name>107L_IIV6</name>
<reference key="1">
    <citation type="journal article" date="2001" name="Virology">
        <title>Analysis of the first complete DNA sequence of an invertebrate iridovirus: coding strategy of the genome of Chilo iridescent virus.</title>
        <authorList>
            <person name="Jakob N.J."/>
            <person name="Mueller K."/>
            <person name="Bahr U."/>
            <person name="Darai G."/>
        </authorList>
    </citation>
    <scope>NUCLEOTIDE SEQUENCE [LARGE SCALE GENOMIC DNA]</scope>
</reference>
<reference key="2">
    <citation type="journal article" date="2007" name="Virol. J.">
        <title>Comparative genomic analysis of the family Iridoviridae: re-annotating and defining the core set of iridovirus genes.</title>
        <authorList>
            <person name="Eaton H.E."/>
            <person name="Metcalf J."/>
            <person name="Penny E."/>
            <person name="Tcherepanov V."/>
            <person name="Upton C."/>
            <person name="Brunetti C.R."/>
        </authorList>
    </citation>
    <scope>GENOME REANNOTATION</scope>
</reference>
<proteinExistence type="predicted"/>
<accession>O55725</accession>
<organismHost>
    <name type="scientific">Acheta domesticus</name>
    <name type="common">House cricket</name>
    <dbReference type="NCBI Taxonomy" id="6997"/>
</organismHost>
<organismHost>
    <name type="scientific">Chilo suppressalis</name>
    <name type="common">Asiatic rice borer moth</name>
    <dbReference type="NCBI Taxonomy" id="168631"/>
</organismHost>
<organismHost>
    <name type="scientific">Gryllus bimaculatus</name>
    <name type="common">Two-spotted cricket</name>
    <dbReference type="NCBI Taxonomy" id="6999"/>
</organismHost>
<organismHost>
    <name type="scientific">Gryllus campestris</name>
    <dbReference type="NCBI Taxonomy" id="58607"/>
</organismHost>
<organismHost>
    <name type="scientific">Spodoptera frugiperda</name>
    <name type="common">Fall armyworm</name>
    <dbReference type="NCBI Taxonomy" id="7108"/>
</organismHost>